<reference key="1">
    <citation type="journal article" date="2005" name="Nucleic Acids Res.">
        <title>The genome sequence of Xanthomonas oryzae pathovar oryzae KACC10331, the bacterial blight pathogen of rice.</title>
        <authorList>
            <person name="Lee B.-M."/>
            <person name="Park Y.-J."/>
            <person name="Park D.-S."/>
            <person name="Kang H.-W."/>
            <person name="Kim J.-G."/>
            <person name="Song E.-S."/>
            <person name="Park I.-C."/>
            <person name="Yoon U.-H."/>
            <person name="Hahn J.-H."/>
            <person name="Koo B.-S."/>
            <person name="Lee G.-B."/>
            <person name="Kim H."/>
            <person name="Park H.-S."/>
            <person name="Yoon K.-O."/>
            <person name="Kim J.-H."/>
            <person name="Jung C.-H."/>
            <person name="Koh N.-H."/>
            <person name="Seo J.-S."/>
            <person name="Go S.-J."/>
        </authorList>
    </citation>
    <scope>NUCLEOTIDE SEQUENCE [LARGE SCALE GENOMIC DNA]</scope>
    <source>
        <strain>KACC10331 / KXO85</strain>
    </source>
</reference>
<proteinExistence type="inferred from homology"/>
<accession>Q5GTT3</accession>
<feature type="chain" id="PRO_1000070191" description="Membrane protein insertase YidC">
    <location>
        <begin position="1"/>
        <end position="574"/>
    </location>
</feature>
<feature type="transmembrane region" description="Helical" evidence="1">
    <location>
        <begin position="6"/>
        <end position="26"/>
    </location>
</feature>
<feature type="transmembrane region" description="Helical" evidence="1">
    <location>
        <begin position="350"/>
        <end position="370"/>
    </location>
</feature>
<feature type="transmembrane region" description="Helical" evidence="1">
    <location>
        <begin position="376"/>
        <end position="396"/>
    </location>
</feature>
<feature type="transmembrane region" description="Helical" evidence="1">
    <location>
        <begin position="447"/>
        <end position="467"/>
    </location>
</feature>
<feature type="transmembrane region" description="Helical" evidence="1">
    <location>
        <begin position="491"/>
        <end position="511"/>
    </location>
</feature>
<feature type="transmembrane region" description="Helical" evidence="1">
    <location>
        <begin position="525"/>
        <end position="545"/>
    </location>
</feature>
<keyword id="KW-0997">Cell inner membrane</keyword>
<keyword id="KW-1003">Cell membrane</keyword>
<keyword id="KW-0143">Chaperone</keyword>
<keyword id="KW-0472">Membrane</keyword>
<keyword id="KW-0653">Protein transport</keyword>
<keyword id="KW-1185">Reference proteome</keyword>
<keyword id="KW-0812">Transmembrane</keyword>
<keyword id="KW-1133">Transmembrane helix</keyword>
<keyword id="KW-0813">Transport</keyword>
<organism>
    <name type="scientific">Xanthomonas oryzae pv. oryzae (strain KACC10331 / KXO85)</name>
    <dbReference type="NCBI Taxonomy" id="291331"/>
    <lineage>
        <taxon>Bacteria</taxon>
        <taxon>Pseudomonadati</taxon>
        <taxon>Pseudomonadota</taxon>
        <taxon>Gammaproteobacteria</taxon>
        <taxon>Lysobacterales</taxon>
        <taxon>Lysobacteraceae</taxon>
        <taxon>Xanthomonas</taxon>
    </lineage>
</organism>
<sequence length="574" mass="63367">MNQTRVFLIFAWLMVAALLWMEWGKEKAAANAPVAAATQSVPAARDLDAATPSAANVPAAQAIPQAGAPGKVPATSTTTATPAAAGTAPVVTLTSDVLRLKLDGRSVLDAELLQFPQTKDGTAPVSLLTEDAAHPYNATSGWASEHSPVPGVGGFRAEQPGTTFELAKGQNTLVVPFVWNGPNGVSIRRTFTLERGRYAISIKDEVINKSAAPWNGYVFRKLSRVPTILSRGMTNPDSFSFNGATWYSPQAGYERRAFKDYMDDGGLNRQITGGWIALLQHHFFTAWIPQNDQASLYVLNKDGPRDVAELRGPAFTVAPGQTATTEARLWVGPKLVSLIAKEDVKGLDRVIDYSRFSIMAIIGQGLFWVLSHLHSFLHNWGWAIVGLVVLLRLVLYPLSSAQYKSSAKMRKFQPRLAQLKERYGDDRVKYQQATMELFKKEKINPMGGCLPLLIQMPIFFALYWVLVESVELRQAPWLGWIQDLTARDPHFILPALNIAIMWATQKLTPTPGIDPMQAKMMQFMPLVFGAMMAFVPSGLVLYWVVNGGLNLLIQWWMIRQHGEKPSKIIRANAK</sequence>
<evidence type="ECO:0000255" key="1">
    <source>
        <dbReference type="HAMAP-Rule" id="MF_01810"/>
    </source>
</evidence>
<comment type="function">
    <text evidence="1">Required for the insertion and/or proper folding and/or complex formation of integral membrane proteins into the membrane. Involved in integration of membrane proteins that insert both dependently and independently of the Sec translocase complex, as well as at least some lipoproteins. Aids folding of multispanning membrane proteins.</text>
</comment>
<comment type="subunit">
    <text evidence="1">Interacts with the Sec translocase complex via SecD. Specifically interacts with transmembrane segments of nascent integral membrane proteins during membrane integration.</text>
</comment>
<comment type="subcellular location">
    <subcellularLocation>
        <location evidence="1">Cell inner membrane</location>
        <topology evidence="1">Multi-pass membrane protein</topology>
    </subcellularLocation>
</comment>
<comment type="similarity">
    <text evidence="1">Belongs to the OXA1/ALB3/YidC family. Type 1 subfamily.</text>
</comment>
<dbReference type="EMBL" id="AE013598">
    <property type="protein sequence ID" value="AAW77890.1"/>
    <property type="molecule type" value="Genomic_DNA"/>
</dbReference>
<dbReference type="SMR" id="Q5GTT3"/>
<dbReference type="STRING" id="291331.XOO4636"/>
<dbReference type="KEGG" id="xoo:XOO4636"/>
<dbReference type="HOGENOM" id="CLU_016535_3_0_6"/>
<dbReference type="Proteomes" id="UP000006735">
    <property type="component" value="Chromosome"/>
</dbReference>
<dbReference type="GO" id="GO:0005886">
    <property type="term" value="C:plasma membrane"/>
    <property type="evidence" value="ECO:0007669"/>
    <property type="project" value="UniProtKB-SubCell"/>
</dbReference>
<dbReference type="GO" id="GO:0032977">
    <property type="term" value="F:membrane insertase activity"/>
    <property type="evidence" value="ECO:0007669"/>
    <property type="project" value="InterPro"/>
</dbReference>
<dbReference type="GO" id="GO:0051205">
    <property type="term" value="P:protein insertion into membrane"/>
    <property type="evidence" value="ECO:0007669"/>
    <property type="project" value="TreeGrafter"/>
</dbReference>
<dbReference type="GO" id="GO:0015031">
    <property type="term" value="P:protein transport"/>
    <property type="evidence" value="ECO:0007669"/>
    <property type="project" value="UniProtKB-KW"/>
</dbReference>
<dbReference type="CDD" id="cd20070">
    <property type="entry name" value="5TM_YidC_Alb3"/>
    <property type="match status" value="1"/>
</dbReference>
<dbReference type="CDD" id="cd19961">
    <property type="entry name" value="EcYidC-like_peri"/>
    <property type="match status" value="1"/>
</dbReference>
<dbReference type="FunFam" id="2.70.98.90:FF:000002">
    <property type="entry name" value="Membrane protein insertase YidC"/>
    <property type="match status" value="1"/>
</dbReference>
<dbReference type="Gene3D" id="2.70.98.90">
    <property type="match status" value="1"/>
</dbReference>
<dbReference type="HAMAP" id="MF_01810">
    <property type="entry name" value="YidC_type1"/>
    <property type="match status" value="1"/>
</dbReference>
<dbReference type="InterPro" id="IPR019998">
    <property type="entry name" value="Membr_insert_YidC"/>
</dbReference>
<dbReference type="InterPro" id="IPR028053">
    <property type="entry name" value="Membr_insert_YidC_N"/>
</dbReference>
<dbReference type="InterPro" id="IPR001708">
    <property type="entry name" value="YidC/ALB3/OXA1/COX18"/>
</dbReference>
<dbReference type="InterPro" id="IPR028055">
    <property type="entry name" value="YidC/Oxa/ALB_C"/>
</dbReference>
<dbReference type="InterPro" id="IPR047196">
    <property type="entry name" value="YidC_ALB_C"/>
</dbReference>
<dbReference type="InterPro" id="IPR038221">
    <property type="entry name" value="YidC_periplasmic_sf"/>
</dbReference>
<dbReference type="NCBIfam" id="NF002352">
    <property type="entry name" value="PRK01318.1-3"/>
    <property type="match status" value="1"/>
</dbReference>
<dbReference type="NCBIfam" id="TIGR03593">
    <property type="entry name" value="yidC_nterm"/>
    <property type="match status" value="1"/>
</dbReference>
<dbReference type="NCBIfam" id="TIGR03592">
    <property type="entry name" value="yidC_oxa1_cterm"/>
    <property type="match status" value="1"/>
</dbReference>
<dbReference type="PANTHER" id="PTHR12428:SF65">
    <property type="entry name" value="CYTOCHROME C OXIDASE ASSEMBLY PROTEIN COX18, MITOCHONDRIAL"/>
    <property type="match status" value="1"/>
</dbReference>
<dbReference type="PANTHER" id="PTHR12428">
    <property type="entry name" value="OXA1"/>
    <property type="match status" value="1"/>
</dbReference>
<dbReference type="Pfam" id="PF02096">
    <property type="entry name" value="60KD_IMP"/>
    <property type="match status" value="1"/>
</dbReference>
<dbReference type="Pfam" id="PF14849">
    <property type="entry name" value="YidC_periplas"/>
    <property type="match status" value="1"/>
</dbReference>
<dbReference type="PRINTS" id="PR00701">
    <property type="entry name" value="60KDINNERMP"/>
</dbReference>
<dbReference type="PRINTS" id="PR01900">
    <property type="entry name" value="YIDCPROTEIN"/>
</dbReference>
<protein>
    <recommendedName>
        <fullName evidence="1">Membrane protein insertase YidC</fullName>
    </recommendedName>
    <alternativeName>
        <fullName evidence="1">Foldase YidC</fullName>
    </alternativeName>
    <alternativeName>
        <fullName evidence="1">Membrane integrase YidC</fullName>
    </alternativeName>
    <alternativeName>
        <fullName evidence="1">Membrane protein YidC</fullName>
    </alternativeName>
</protein>
<name>YIDC_XANOR</name>
<gene>
    <name evidence="1" type="primary">yidC</name>
    <name type="ordered locus">XOO4636</name>
</gene>